<feature type="chain" id="PRO_0000376164" description="NADH-quinone oxidoreductase subunit B">
    <location>
        <begin position="1"/>
        <end position="167"/>
    </location>
</feature>
<feature type="binding site" evidence="1">
    <location>
        <position position="40"/>
    </location>
    <ligand>
        <name>[4Fe-4S] cluster</name>
        <dbReference type="ChEBI" id="CHEBI:49883"/>
    </ligand>
</feature>
<feature type="binding site" evidence="1">
    <location>
        <position position="41"/>
    </location>
    <ligand>
        <name>[4Fe-4S] cluster</name>
        <dbReference type="ChEBI" id="CHEBI:49883"/>
    </ligand>
</feature>
<feature type="binding site" evidence="1">
    <location>
        <position position="105"/>
    </location>
    <ligand>
        <name>[4Fe-4S] cluster</name>
        <dbReference type="ChEBI" id="CHEBI:49883"/>
    </ligand>
</feature>
<feature type="binding site" evidence="1">
    <location>
        <position position="134"/>
    </location>
    <ligand>
        <name>[4Fe-4S] cluster</name>
        <dbReference type="ChEBI" id="CHEBI:49883"/>
    </ligand>
</feature>
<gene>
    <name evidence="1" type="primary">nuoB</name>
    <name type="ordered locus">C8J_1475</name>
</gene>
<reference key="1">
    <citation type="journal article" date="2007" name="J. Bacteriol.">
        <title>The complete genome sequence of Campylobacter jejuni strain 81116 (NCTC11828).</title>
        <authorList>
            <person name="Pearson B.M."/>
            <person name="Gaskin D.J.H."/>
            <person name="Segers R.P.A.M."/>
            <person name="Wells J.M."/>
            <person name="Nuijten P.J.M."/>
            <person name="van Vliet A.H.M."/>
        </authorList>
    </citation>
    <scope>NUCLEOTIDE SEQUENCE [LARGE SCALE GENOMIC DNA]</scope>
    <source>
        <strain>81116 / NCTC 11828</strain>
    </source>
</reference>
<evidence type="ECO:0000255" key="1">
    <source>
        <dbReference type="HAMAP-Rule" id="MF_01356"/>
    </source>
</evidence>
<name>NUOB_CAMJ8</name>
<organism>
    <name type="scientific">Campylobacter jejuni subsp. jejuni serotype O:6 (strain 81116 / NCTC 11828)</name>
    <dbReference type="NCBI Taxonomy" id="407148"/>
    <lineage>
        <taxon>Bacteria</taxon>
        <taxon>Pseudomonadati</taxon>
        <taxon>Campylobacterota</taxon>
        <taxon>Epsilonproteobacteria</taxon>
        <taxon>Campylobacterales</taxon>
        <taxon>Campylobacteraceae</taxon>
        <taxon>Campylobacter</taxon>
    </lineage>
</organism>
<protein>
    <recommendedName>
        <fullName evidence="1">NADH-quinone oxidoreductase subunit B</fullName>
        <ecNumber evidence="1">7.1.1.-</ecNumber>
    </recommendedName>
    <alternativeName>
        <fullName evidence="1">NADH dehydrogenase I subunit B</fullName>
    </alternativeName>
    <alternativeName>
        <fullName evidence="1">NDH-1 subunit B</fullName>
    </alternativeName>
</protein>
<comment type="function">
    <text evidence="1">NDH-1 shuttles electrons from NADH, via FMN and iron-sulfur (Fe-S) centers, to quinones in the respiratory chain. The immediate electron acceptor for the enzyme in this species is believed to be ubiquinone. Couples the redox reaction to proton translocation (for every two electrons transferred, four hydrogen ions are translocated across the cytoplasmic membrane), and thus conserves the redox energy in a proton gradient.</text>
</comment>
<comment type="catalytic activity">
    <reaction evidence="1">
        <text>a quinone + NADH + 5 H(+)(in) = a quinol + NAD(+) + 4 H(+)(out)</text>
        <dbReference type="Rhea" id="RHEA:57888"/>
        <dbReference type="ChEBI" id="CHEBI:15378"/>
        <dbReference type="ChEBI" id="CHEBI:24646"/>
        <dbReference type="ChEBI" id="CHEBI:57540"/>
        <dbReference type="ChEBI" id="CHEBI:57945"/>
        <dbReference type="ChEBI" id="CHEBI:132124"/>
    </reaction>
</comment>
<comment type="cofactor">
    <cofactor evidence="1">
        <name>[4Fe-4S] cluster</name>
        <dbReference type="ChEBI" id="CHEBI:49883"/>
    </cofactor>
    <text evidence="1">Binds 1 [4Fe-4S] cluster.</text>
</comment>
<comment type="subunit">
    <text evidence="1">NDH-1 is composed of 14 different subunits. Subunits NuoB, C, D, E, F, and G constitute the peripheral sector of the complex.</text>
</comment>
<comment type="subcellular location">
    <subcellularLocation>
        <location evidence="1">Cell inner membrane</location>
        <topology evidence="1">Peripheral membrane protein</topology>
        <orientation evidence="1">Cytoplasmic side</orientation>
    </subcellularLocation>
</comment>
<comment type="similarity">
    <text evidence="1">Belongs to the complex I 20 kDa subunit family.</text>
</comment>
<dbReference type="EC" id="7.1.1.-" evidence="1"/>
<dbReference type="EMBL" id="CP000814">
    <property type="protein sequence ID" value="ABV53073.1"/>
    <property type="molecule type" value="Genomic_DNA"/>
</dbReference>
<dbReference type="RefSeq" id="WP_002777888.1">
    <property type="nucleotide sequence ID" value="NC_009839.1"/>
</dbReference>
<dbReference type="SMR" id="A8FNN6"/>
<dbReference type="KEGG" id="cju:C8J_1475"/>
<dbReference type="HOGENOM" id="CLU_055737_7_3_7"/>
<dbReference type="GO" id="GO:0005886">
    <property type="term" value="C:plasma membrane"/>
    <property type="evidence" value="ECO:0007669"/>
    <property type="project" value="UniProtKB-SubCell"/>
</dbReference>
<dbReference type="GO" id="GO:0045271">
    <property type="term" value="C:respiratory chain complex I"/>
    <property type="evidence" value="ECO:0007669"/>
    <property type="project" value="TreeGrafter"/>
</dbReference>
<dbReference type="GO" id="GO:0051539">
    <property type="term" value="F:4 iron, 4 sulfur cluster binding"/>
    <property type="evidence" value="ECO:0007669"/>
    <property type="project" value="UniProtKB-KW"/>
</dbReference>
<dbReference type="GO" id="GO:0005506">
    <property type="term" value="F:iron ion binding"/>
    <property type="evidence" value="ECO:0007669"/>
    <property type="project" value="UniProtKB-UniRule"/>
</dbReference>
<dbReference type="GO" id="GO:0008137">
    <property type="term" value="F:NADH dehydrogenase (ubiquinone) activity"/>
    <property type="evidence" value="ECO:0007669"/>
    <property type="project" value="InterPro"/>
</dbReference>
<dbReference type="GO" id="GO:0050136">
    <property type="term" value="F:NADH:ubiquinone reductase (non-electrogenic) activity"/>
    <property type="evidence" value="ECO:0007669"/>
    <property type="project" value="UniProtKB-UniRule"/>
</dbReference>
<dbReference type="GO" id="GO:0048038">
    <property type="term" value="F:quinone binding"/>
    <property type="evidence" value="ECO:0007669"/>
    <property type="project" value="UniProtKB-KW"/>
</dbReference>
<dbReference type="GO" id="GO:0009060">
    <property type="term" value="P:aerobic respiration"/>
    <property type="evidence" value="ECO:0007669"/>
    <property type="project" value="TreeGrafter"/>
</dbReference>
<dbReference type="GO" id="GO:0015990">
    <property type="term" value="P:electron transport coupled proton transport"/>
    <property type="evidence" value="ECO:0007669"/>
    <property type="project" value="TreeGrafter"/>
</dbReference>
<dbReference type="FunFam" id="3.40.50.12280:FF:000002">
    <property type="entry name" value="NADH-quinone oxidoreductase subunit B"/>
    <property type="match status" value="1"/>
</dbReference>
<dbReference type="Gene3D" id="3.40.50.12280">
    <property type="match status" value="1"/>
</dbReference>
<dbReference type="HAMAP" id="MF_01356">
    <property type="entry name" value="NDH1_NuoB"/>
    <property type="match status" value="1"/>
</dbReference>
<dbReference type="InterPro" id="IPR006137">
    <property type="entry name" value="NADH_UbQ_OxRdtase-like_20kDa"/>
</dbReference>
<dbReference type="InterPro" id="IPR006138">
    <property type="entry name" value="NADH_UQ_OxRdtase_20Kd_su"/>
</dbReference>
<dbReference type="NCBIfam" id="TIGR01957">
    <property type="entry name" value="nuoB_fam"/>
    <property type="match status" value="1"/>
</dbReference>
<dbReference type="NCBIfam" id="NF005012">
    <property type="entry name" value="PRK06411.1"/>
    <property type="match status" value="1"/>
</dbReference>
<dbReference type="PANTHER" id="PTHR11995">
    <property type="entry name" value="NADH DEHYDROGENASE"/>
    <property type="match status" value="1"/>
</dbReference>
<dbReference type="PANTHER" id="PTHR11995:SF14">
    <property type="entry name" value="NADH DEHYDROGENASE [UBIQUINONE] IRON-SULFUR PROTEIN 7, MITOCHONDRIAL"/>
    <property type="match status" value="1"/>
</dbReference>
<dbReference type="Pfam" id="PF01058">
    <property type="entry name" value="Oxidored_q6"/>
    <property type="match status" value="1"/>
</dbReference>
<dbReference type="SUPFAM" id="SSF56770">
    <property type="entry name" value="HydA/Nqo6-like"/>
    <property type="match status" value="1"/>
</dbReference>
<sequence length="167" mass="18668">MAEHQVNYASGLPVVLTSVDKLVQWGRSNSLWALSYGLACCAIEMMAAGGSRYDFDRFGTIFRASPRHSEVMIIAGTLCKKHAEFTRRLYDQMPDPKWVISMGSCANTGGMFNTYSTVQGVDRIIPVDIYVPGCAPRPESFQFALMILQKKIRKEKASRKIAPKRLV</sequence>
<keyword id="KW-0004">4Fe-4S</keyword>
<keyword id="KW-0997">Cell inner membrane</keyword>
<keyword id="KW-1003">Cell membrane</keyword>
<keyword id="KW-0408">Iron</keyword>
<keyword id="KW-0411">Iron-sulfur</keyword>
<keyword id="KW-0472">Membrane</keyword>
<keyword id="KW-0479">Metal-binding</keyword>
<keyword id="KW-0520">NAD</keyword>
<keyword id="KW-0874">Quinone</keyword>
<keyword id="KW-1278">Translocase</keyword>
<keyword id="KW-0813">Transport</keyword>
<keyword id="KW-0830">Ubiquinone</keyword>
<accession>A8FNN6</accession>
<proteinExistence type="inferred from homology"/>